<sequence>MSNHQYFGTDGIRGRVGDSPITPDFVLKLGWAAGKVLARHGSRKIIIGKDTRISGYMLESALEAGLAAAGLSAAFTGPMPTPAIAYLTRTFRAEAGIVISASHNPFYDNGIKFFSIDGTKLPDEVEEAIEAELAKPLTCVESVELGKASRIVDAAGRYIEFCKGTFPGNLSLKGLKIVVDCANGATYHIAPSVLRELGATVVTLGCQPDGMNINQECGATDVRLLQSRVLAEKADLGIAYDGDGDRVIMVDHLGQKVNGDQILYVIAREKLRQGQLSGGVVGTLMSNMGLELALKQLGVPFVRSRVGDRYVLEKMQEKGWRIGAENSGHVILLDKTTTGDGIIAGLQVLSAMVGNHMNLHDLCSGMRLLPQILVNVRFAGQHDPLASAAVKQASDEVEQQLAGRGRVLLRKSGTEPLIRVMVEGEDTEQVSRLAHHIADAVKAAG</sequence>
<accession>Q2NW27</accession>
<comment type="function">
    <text evidence="1">Catalyzes the conversion of glucosamine-6-phosphate to glucosamine-1-phosphate.</text>
</comment>
<comment type="catalytic activity">
    <reaction evidence="1">
        <text>alpha-D-glucosamine 1-phosphate = D-glucosamine 6-phosphate</text>
        <dbReference type="Rhea" id="RHEA:23424"/>
        <dbReference type="ChEBI" id="CHEBI:58516"/>
        <dbReference type="ChEBI" id="CHEBI:58725"/>
        <dbReference type="EC" id="5.4.2.10"/>
    </reaction>
</comment>
<comment type="cofactor">
    <cofactor evidence="1">
        <name>Mg(2+)</name>
        <dbReference type="ChEBI" id="CHEBI:18420"/>
    </cofactor>
    <text evidence="1">Binds 1 Mg(2+) ion per subunit.</text>
</comment>
<comment type="PTM">
    <text evidence="1">Activated by phosphorylation.</text>
</comment>
<comment type="similarity">
    <text evidence="1">Belongs to the phosphohexose mutase family.</text>
</comment>
<dbReference type="EC" id="5.4.2.10" evidence="1"/>
<dbReference type="EMBL" id="AP008232">
    <property type="protein sequence ID" value="BAE73648.1"/>
    <property type="molecule type" value="Genomic_DNA"/>
</dbReference>
<dbReference type="RefSeq" id="WP_011410236.1">
    <property type="nucleotide sequence ID" value="NC_007712.1"/>
</dbReference>
<dbReference type="SMR" id="Q2NW27"/>
<dbReference type="STRING" id="343509.SG0373"/>
<dbReference type="KEGG" id="sgl:SG0373"/>
<dbReference type="eggNOG" id="COG1109">
    <property type="taxonomic scope" value="Bacteria"/>
</dbReference>
<dbReference type="HOGENOM" id="CLU_016950_7_0_6"/>
<dbReference type="OrthoDB" id="9803322at2"/>
<dbReference type="Proteomes" id="UP000001932">
    <property type="component" value="Chromosome"/>
</dbReference>
<dbReference type="GO" id="GO:0005829">
    <property type="term" value="C:cytosol"/>
    <property type="evidence" value="ECO:0007669"/>
    <property type="project" value="TreeGrafter"/>
</dbReference>
<dbReference type="GO" id="GO:0000287">
    <property type="term" value="F:magnesium ion binding"/>
    <property type="evidence" value="ECO:0007669"/>
    <property type="project" value="UniProtKB-UniRule"/>
</dbReference>
<dbReference type="GO" id="GO:0008966">
    <property type="term" value="F:phosphoglucosamine mutase activity"/>
    <property type="evidence" value="ECO:0007669"/>
    <property type="project" value="UniProtKB-UniRule"/>
</dbReference>
<dbReference type="GO" id="GO:0004615">
    <property type="term" value="F:phosphomannomutase activity"/>
    <property type="evidence" value="ECO:0007669"/>
    <property type="project" value="TreeGrafter"/>
</dbReference>
<dbReference type="GO" id="GO:0005975">
    <property type="term" value="P:carbohydrate metabolic process"/>
    <property type="evidence" value="ECO:0007669"/>
    <property type="project" value="InterPro"/>
</dbReference>
<dbReference type="GO" id="GO:0009252">
    <property type="term" value="P:peptidoglycan biosynthetic process"/>
    <property type="evidence" value="ECO:0007669"/>
    <property type="project" value="TreeGrafter"/>
</dbReference>
<dbReference type="GO" id="GO:0006048">
    <property type="term" value="P:UDP-N-acetylglucosamine biosynthetic process"/>
    <property type="evidence" value="ECO:0007669"/>
    <property type="project" value="TreeGrafter"/>
</dbReference>
<dbReference type="CDD" id="cd05802">
    <property type="entry name" value="GlmM"/>
    <property type="match status" value="1"/>
</dbReference>
<dbReference type="FunFam" id="3.30.310.50:FF:000001">
    <property type="entry name" value="Phosphoglucosamine mutase"/>
    <property type="match status" value="1"/>
</dbReference>
<dbReference type="FunFam" id="3.40.120.10:FF:000001">
    <property type="entry name" value="Phosphoglucosamine mutase"/>
    <property type="match status" value="1"/>
</dbReference>
<dbReference type="FunFam" id="3.40.120.10:FF:000002">
    <property type="entry name" value="Phosphoglucosamine mutase"/>
    <property type="match status" value="1"/>
</dbReference>
<dbReference type="Gene3D" id="3.40.120.10">
    <property type="entry name" value="Alpha-D-Glucose-1,6-Bisphosphate, subunit A, domain 3"/>
    <property type="match status" value="3"/>
</dbReference>
<dbReference type="Gene3D" id="3.30.310.50">
    <property type="entry name" value="Alpha-D-phosphohexomutase, C-terminal domain"/>
    <property type="match status" value="1"/>
</dbReference>
<dbReference type="HAMAP" id="MF_01554_B">
    <property type="entry name" value="GlmM_B"/>
    <property type="match status" value="1"/>
</dbReference>
<dbReference type="InterPro" id="IPR005844">
    <property type="entry name" value="A-D-PHexomutase_a/b/a-I"/>
</dbReference>
<dbReference type="InterPro" id="IPR016055">
    <property type="entry name" value="A-D-PHexomutase_a/b/a-I/II/III"/>
</dbReference>
<dbReference type="InterPro" id="IPR005845">
    <property type="entry name" value="A-D-PHexomutase_a/b/a-II"/>
</dbReference>
<dbReference type="InterPro" id="IPR005846">
    <property type="entry name" value="A-D-PHexomutase_a/b/a-III"/>
</dbReference>
<dbReference type="InterPro" id="IPR005843">
    <property type="entry name" value="A-D-PHexomutase_C"/>
</dbReference>
<dbReference type="InterPro" id="IPR036900">
    <property type="entry name" value="A-D-PHexomutase_C_sf"/>
</dbReference>
<dbReference type="InterPro" id="IPR016066">
    <property type="entry name" value="A-D-PHexomutase_CS"/>
</dbReference>
<dbReference type="InterPro" id="IPR005841">
    <property type="entry name" value="Alpha-D-phosphohexomutase_SF"/>
</dbReference>
<dbReference type="InterPro" id="IPR006352">
    <property type="entry name" value="GlmM_bact"/>
</dbReference>
<dbReference type="InterPro" id="IPR050060">
    <property type="entry name" value="Phosphoglucosamine_mutase"/>
</dbReference>
<dbReference type="NCBIfam" id="TIGR01455">
    <property type="entry name" value="glmM"/>
    <property type="match status" value="1"/>
</dbReference>
<dbReference type="NCBIfam" id="NF008139">
    <property type="entry name" value="PRK10887.1"/>
    <property type="match status" value="1"/>
</dbReference>
<dbReference type="PANTHER" id="PTHR42946:SF1">
    <property type="entry name" value="PHOSPHOGLUCOMUTASE (ALPHA-D-GLUCOSE-1,6-BISPHOSPHATE-DEPENDENT)"/>
    <property type="match status" value="1"/>
</dbReference>
<dbReference type="PANTHER" id="PTHR42946">
    <property type="entry name" value="PHOSPHOHEXOSE MUTASE"/>
    <property type="match status" value="1"/>
</dbReference>
<dbReference type="Pfam" id="PF02878">
    <property type="entry name" value="PGM_PMM_I"/>
    <property type="match status" value="1"/>
</dbReference>
<dbReference type="Pfam" id="PF02879">
    <property type="entry name" value="PGM_PMM_II"/>
    <property type="match status" value="1"/>
</dbReference>
<dbReference type="Pfam" id="PF02880">
    <property type="entry name" value="PGM_PMM_III"/>
    <property type="match status" value="1"/>
</dbReference>
<dbReference type="Pfam" id="PF00408">
    <property type="entry name" value="PGM_PMM_IV"/>
    <property type="match status" value="1"/>
</dbReference>
<dbReference type="PRINTS" id="PR00509">
    <property type="entry name" value="PGMPMM"/>
</dbReference>
<dbReference type="SUPFAM" id="SSF55957">
    <property type="entry name" value="Phosphoglucomutase, C-terminal domain"/>
    <property type="match status" value="1"/>
</dbReference>
<dbReference type="SUPFAM" id="SSF53738">
    <property type="entry name" value="Phosphoglucomutase, first 3 domains"/>
    <property type="match status" value="3"/>
</dbReference>
<dbReference type="PROSITE" id="PS00710">
    <property type="entry name" value="PGM_PMM"/>
    <property type="match status" value="1"/>
</dbReference>
<organism>
    <name type="scientific">Sodalis glossinidius (strain morsitans)</name>
    <dbReference type="NCBI Taxonomy" id="343509"/>
    <lineage>
        <taxon>Bacteria</taxon>
        <taxon>Pseudomonadati</taxon>
        <taxon>Pseudomonadota</taxon>
        <taxon>Gammaproteobacteria</taxon>
        <taxon>Enterobacterales</taxon>
        <taxon>Bruguierivoracaceae</taxon>
        <taxon>Sodalis</taxon>
    </lineage>
</organism>
<evidence type="ECO:0000255" key="1">
    <source>
        <dbReference type="HAMAP-Rule" id="MF_01554"/>
    </source>
</evidence>
<feature type="chain" id="PRO_0000301383" description="Phosphoglucosamine mutase">
    <location>
        <begin position="1"/>
        <end position="445"/>
    </location>
</feature>
<feature type="active site" description="Phosphoserine intermediate" evidence="1">
    <location>
        <position position="102"/>
    </location>
</feature>
<feature type="binding site" description="via phosphate group" evidence="1">
    <location>
        <position position="102"/>
    </location>
    <ligand>
        <name>Mg(2+)</name>
        <dbReference type="ChEBI" id="CHEBI:18420"/>
    </ligand>
</feature>
<feature type="binding site" evidence="1">
    <location>
        <position position="241"/>
    </location>
    <ligand>
        <name>Mg(2+)</name>
        <dbReference type="ChEBI" id="CHEBI:18420"/>
    </ligand>
</feature>
<feature type="binding site" evidence="1">
    <location>
        <position position="243"/>
    </location>
    <ligand>
        <name>Mg(2+)</name>
        <dbReference type="ChEBI" id="CHEBI:18420"/>
    </ligand>
</feature>
<feature type="binding site" evidence="1">
    <location>
        <position position="245"/>
    </location>
    <ligand>
        <name>Mg(2+)</name>
        <dbReference type="ChEBI" id="CHEBI:18420"/>
    </ligand>
</feature>
<feature type="modified residue" description="Phosphoserine" evidence="1">
    <location>
        <position position="102"/>
    </location>
</feature>
<keyword id="KW-0413">Isomerase</keyword>
<keyword id="KW-0460">Magnesium</keyword>
<keyword id="KW-0479">Metal-binding</keyword>
<keyword id="KW-0597">Phosphoprotein</keyword>
<proteinExistence type="inferred from homology"/>
<gene>
    <name evidence="1" type="primary">glmM</name>
    <name type="ordered locus">SG0373</name>
</gene>
<protein>
    <recommendedName>
        <fullName evidence="1">Phosphoglucosamine mutase</fullName>
        <ecNumber evidence="1">5.4.2.10</ecNumber>
    </recommendedName>
</protein>
<name>GLMM_SODGM</name>
<reference key="1">
    <citation type="journal article" date="2006" name="Genome Res.">
        <title>Massive genome erosion and functional adaptations provide insights into the symbiotic lifestyle of Sodalis glossinidius in the tsetse host.</title>
        <authorList>
            <person name="Toh H."/>
            <person name="Weiss B.L."/>
            <person name="Perkin S.A.H."/>
            <person name="Yamashita A."/>
            <person name="Oshima K."/>
            <person name="Hattori M."/>
            <person name="Aksoy S."/>
        </authorList>
    </citation>
    <scope>NUCLEOTIDE SEQUENCE [LARGE SCALE GENOMIC DNA]</scope>
    <source>
        <strain>morsitans</strain>
    </source>
</reference>